<dbReference type="EMBL" id="DQ902576">
    <property type="protein sequence ID" value="ABK41956.1"/>
    <property type="molecule type" value="mRNA"/>
</dbReference>
<dbReference type="PIR" id="A01682">
    <property type="entry name" value="V7OH1D"/>
</dbReference>
<dbReference type="SMR" id="P01412"/>
<dbReference type="TopDownProteomics" id="P01412"/>
<dbReference type="GO" id="GO:0005576">
    <property type="term" value="C:extracellular region"/>
    <property type="evidence" value="ECO:0007669"/>
    <property type="project" value="UniProtKB-SubCell"/>
</dbReference>
<dbReference type="GO" id="GO:0090729">
    <property type="term" value="F:toxin activity"/>
    <property type="evidence" value="ECO:0007669"/>
    <property type="project" value="UniProtKB-KW"/>
</dbReference>
<dbReference type="CDD" id="cd00206">
    <property type="entry name" value="TFP_snake_toxin"/>
    <property type="match status" value="1"/>
</dbReference>
<dbReference type="FunFam" id="2.10.60.10:FF:000024">
    <property type="entry name" value="Cytotoxin 1"/>
    <property type="match status" value="1"/>
</dbReference>
<dbReference type="Gene3D" id="2.10.60.10">
    <property type="entry name" value="CD59"/>
    <property type="match status" value="1"/>
</dbReference>
<dbReference type="InterPro" id="IPR003571">
    <property type="entry name" value="Snake_3FTx"/>
</dbReference>
<dbReference type="InterPro" id="IPR045860">
    <property type="entry name" value="Snake_toxin-like_sf"/>
</dbReference>
<dbReference type="InterPro" id="IPR018354">
    <property type="entry name" value="Snake_toxin_con_site"/>
</dbReference>
<dbReference type="InterPro" id="IPR054131">
    <property type="entry name" value="Toxin_cobra-type"/>
</dbReference>
<dbReference type="Pfam" id="PF21947">
    <property type="entry name" value="Toxin_cobra-type"/>
    <property type="match status" value="1"/>
</dbReference>
<dbReference type="SUPFAM" id="SSF57302">
    <property type="entry name" value="Snake toxin-like"/>
    <property type="match status" value="1"/>
</dbReference>
<dbReference type="PROSITE" id="PS00272">
    <property type="entry name" value="SNAKE_TOXIN"/>
    <property type="match status" value="1"/>
</dbReference>
<accession>P01412</accession>
<accession>A8N287</accession>
<feature type="signal peptide" evidence="2">
    <location>
        <begin position="1"/>
        <end position="21"/>
    </location>
</feature>
<feature type="chain" id="PRO_0000093629" description="Weak toxin DE-1" evidence="2">
    <location>
        <begin position="22"/>
        <end position="83"/>
    </location>
</feature>
<feature type="disulfide bond" evidence="1">
    <location>
        <begin position="24"/>
        <end position="45"/>
    </location>
</feature>
<feature type="disulfide bond" evidence="1">
    <location>
        <begin position="38"/>
        <end position="62"/>
    </location>
</feature>
<feature type="disulfide bond" evidence="1">
    <location>
        <begin position="64"/>
        <end position="75"/>
    </location>
</feature>
<feature type="disulfide bond" evidence="1">
    <location>
        <begin position="76"/>
        <end position="81"/>
    </location>
</feature>
<feature type="sequence conflict" description="In Ref. 2; AA sequence." evidence="3" ref="2">
    <original>DT</original>
    <variation>N</variation>
    <location>
        <begin position="43"/>
        <end position="44"/>
    </location>
</feature>
<feature type="sequence conflict" description="In Ref. 2; AA sequence." evidence="3" ref="2">
    <original>NDHHG</original>
    <variation>HNDGH</variation>
    <location>
        <begin position="51"/>
        <end position="55"/>
    </location>
</feature>
<feature type="sequence conflict" description="In Ref. 2; AA sequence." evidence="3" ref="2">
    <location>
        <position position="73"/>
    </location>
</feature>
<organism>
    <name type="scientific">Ophiophagus hannah</name>
    <name type="common">King cobra</name>
    <name type="synonym">Naja hannah</name>
    <dbReference type="NCBI Taxonomy" id="8665"/>
    <lineage>
        <taxon>Eukaryota</taxon>
        <taxon>Metazoa</taxon>
        <taxon>Chordata</taxon>
        <taxon>Craniata</taxon>
        <taxon>Vertebrata</taxon>
        <taxon>Euteleostomi</taxon>
        <taxon>Lepidosauria</taxon>
        <taxon>Squamata</taxon>
        <taxon>Bifurcata</taxon>
        <taxon>Unidentata</taxon>
        <taxon>Episquamata</taxon>
        <taxon>Toxicofera</taxon>
        <taxon>Serpentes</taxon>
        <taxon>Colubroidea</taxon>
        <taxon>Elapidae</taxon>
        <taxon>Elapinae</taxon>
        <taxon>Ophiophagus</taxon>
    </lineage>
</organism>
<reference key="1">
    <citation type="journal article" date="2007" name="FASEB J.">
        <title>Beta-cardiotoxin: a new three-finger toxin from Ophiophagus hannah (king cobra) venom with beta-blocker activity.</title>
        <authorList>
            <person name="Rajagopalan N."/>
            <person name="Pung Y.F."/>
            <person name="Zhu Y.Z."/>
            <person name="Wong P.T.H."/>
            <person name="Kumar P.P."/>
            <person name="Kini R.M."/>
        </authorList>
    </citation>
    <scope>NUCLEOTIDE SEQUENCE [MRNA]</scope>
    <source>
        <tissue>Venom gland</tissue>
    </source>
</reference>
<reference key="2">
    <citation type="journal article" date="1977" name="Hoppe-Seyler's Z. Physiol. Chem.">
        <title>Snake venoms. The amino-acid sequence of polypeptide DE-1 from Ophiophagus hannah (King cobra) venom.</title>
        <authorList>
            <person name="Joubert F.J."/>
        </authorList>
    </citation>
    <scope>PROTEIN SEQUENCE OF 22-83</scope>
    <scope>TOXIC DOSE</scope>
    <scope>SUBCELLULAR LOCATION</scope>
    <source>
        <tissue>Venom</tissue>
    </source>
</reference>
<evidence type="ECO:0000250" key="1">
    <source>
        <dbReference type="UniProtKB" id="P0C1Z0"/>
    </source>
</evidence>
<evidence type="ECO:0000269" key="2">
    <source>
    </source>
</evidence>
<evidence type="ECO:0000305" key="3"/>
<sequence>MKTLLLTLVVVTIVCLDLGYSLICFNQETYRPETTTTCPDGEDTCYSTFWNDHHGVKIERGCGCPRVNPPISIICCKTDKCNN</sequence>
<protein>
    <recommendedName>
        <fullName>Weak toxin DE-1</fullName>
    </recommendedName>
</protein>
<comment type="subcellular location">
    <subcellularLocation>
        <location evidence="2">Secreted</location>
    </subcellularLocation>
</comment>
<comment type="tissue specificity">
    <text evidence="3">Expressed by the venom gland.</text>
</comment>
<comment type="toxic dose">
    <text evidence="2">LD(50) is &gt;250 mg/kg by subcutaneous injection.</text>
</comment>
<comment type="similarity">
    <text evidence="3">Belongs to the three-finger toxin family. Short-chain subfamily. Type I alpha-neurotoxin sub-subfamily.</text>
</comment>
<name>3S11A_OPHHA</name>
<keyword id="KW-0903">Direct protein sequencing</keyword>
<keyword id="KW-1015">Disulfide bond</keyword>
<keyword id="KW-0964">Secreted</keyword>
<keyword id="KW-0732">Signal</keyword>
<keyword id="KW-0800">Toxin</keyword>
<proteinExistence type="evidence at protein level"/>